<reference key="1">
    <citation type="journal article" date="2008" name="PLoS ONE">
        <title>Genome biology of Actinobacillus pleuropneumoniae JL03, an isolate of serotype 3 prevalent in China.</title>
        <authorList>
            <person name="Xu Z."/>
            <person name="Zhou Y."/>
            <person name="Li L."/>
            <person name="Zhou R."/>
            <person name="Xiao S."/>
            <person name="Wan Y."/>
            <person name="Zhang S."/>
            <person name="Wang K."/>
            <person name="Li W."/>
            <person name="Li L."/>
            <person name="Jin H."/>
            <person name="Kang M."/>
            <person name="Dalai B."/>
            <person name="Li T."/>
            <person name="Liu L."/>
            <person name="Cheng Y."/>
            <person name="Zhang L."/>
            <person name="Xu T."/>
            <person name="Zheng H."/>
            <person name="Pu S."/>
            <person name="Wang B."/>
            <person name="Gu W."/>
            <person name="Zhang X.L."/>
            <person name="Zhu G.-F."/>
            <person name="Wang S."/>
            <person name="Zhao G.-P."/>
            <person name="Chen H."/>
        </authorList>
    </citation>
    <scope>NUCLEOTIDE SEQUENCE [LARGE SCALE GENOMIC DNA]</scope>
    <source>
        <strain>JL03</strain>
    </source>
</reference>
<feature type="chain" id="PRO_1000142915" description="Large ribosomal subunit protein uL16">
    <location>
        <begin position="1"/>
        <end position="136"/>
    </location>
</feature>
<dbReference type="EMBL" id="CP000687">
    <property type="protein sequence ID" value="ABY70352.1"/>
    <property type="molecule type" value="Genomic_DNA"/>
</dbReference>
<dbReference type="RefSeq" id="WP_005599294.1">
    <property type="nucleotide sequence ID" value="NC_010278.1"/>
</dbReference>
<dbReference type="SMR" id="B0BST8"/>
<dbReference type="GeneID" id="48600059"/>
<dbReference type="KEGG" id="apj:APJL_1802"/>
<dbReference type="HOGENOM" id="CLU_078858_2_1_6"/>
<dbReference type="Proteomes" id="UP000008547">
    <property type="component" value="Chromosome"/>
</dbReference>
<dbReference type="GO" id="GO:0022625">
    <property type="term" value="C:cytosolic large ribosomal subunit"/>
    <property type="evidence" value="ECO:0007669"/>
    <property type="project" value="TreeGrafter"/>
</dbReference>
<dbReference type="GO" id="GO:0019843">
    <property type="term" value="F:rRNA binding"/>
    <property type="evidence" value="ECO:0007669"/>
    <property type="project" value="UniProtKB-UniRule"/>
</dbReference>
<dbReference type="GO" id="GO:0003735">
    <property type="term" value="F:structural constituent of ribosome"/>
    <property type="evidence" value="ECO:0007669"/>
    <property type="project" value="InterPro"/>
</dbReference>
<dbReference type="GO" id="GO:0000049">
    <property type="term" value="F:tRNA binding"/>
    <property type="evidence" value="ECO:0007669"/>
    <property type="project" value="UniProtKB-KW"/>
</dbReference>
<dbReference type="GO" id="GO:0006412">
    <property type="term" value="P:translation"/>
    <property type="evidence" value="ECO:0007669"/>
    <property type="project" value="UniProtKB-UniRule"/>
</dbReference>
<dbReference type="CDD" id="cd01433">
    <property type="entry name" value="Ribosomal_L16_L10e"/>
    <property type="match status" value="1"/>
</dbReference>
<dbReference type="FunFam" id="3.90.1170.10:FF:000001">
    <property type="entry name" value="50S ribosomal protein L16"/>
    <property type="match status" value="1"/>
</dbReference>
<dbReference type="Gene3D" id="3.90.1170.10">
    <property type="entry name" value="Ribosomal protein L10e/L16"/>
    <property type="match status" value="1"/>
</dbReference>
<dbReference type="HAMAP" id="MF_01342">
    <property type="entry name" value="Ribosomal_uL16"/>
    <property type="match status" value="1"/>
</dbReference>
<dbReference type="InterPro" id="IPR047873">
    <property type="entry name" value="Ribosomal_uL16"/>
</dbReference>
<dbReference type="InterPro" id="IPR000114">
    <property type="entry name" value="Ribosomal_uL16_bact-type"/>
</dbReference>
<dbReference type="InterPro" id="IPR020798">
    <property type="entry name" value="Ribosomal_uL16_CS"/>
</dbReference>
<dbReference type="InterPro" id="IPR016180">
    <property type="entry name" value="Ribosomal_uL16_dom"/>
</dbReference>
<dbReference type="InterPro" id="IPR036920">
    <property type="entry name" value="Ribosomal_uL16_sf"/>
</dbReference>
<dbReference type="NCBIfam" id="TIGR01164">
    <property type="entry name" value="rplP_bact"/>
    <property type="match status" value="1"/>
</dbReference>
<dbReference type="PANTHER" id="PTHR12220">
    <property type="entry name" value="50S/60S RIBOSOMAL PROTEIN L16"/>
    <property type="match status" value="1"/>
</dbReference>
<dbReference type="PANTHER" id="PTHR12220:SF13">
    <property type="entry name" value="LARGE RIBOSOMAL SUBUNIT PROTEIN UL16M"/>
    <property type="match status" value="1"/>
</dbReference>
<dbReference type="Pfam" id="PF00252">
    <property type="entry name" value="Ribosomal_L16"/>
    <property type="match status" value="1"/>
</dbReference>
<dbReference type="PRINTS" id="PR00060">
    <property type="entry name" value="RIBOSOMALL16"/>
</dbReference>
<dbReference type="SUPFAM" id="SSF54686">
    <property type="entry name" value="Ribosomal protein L16p/L10e"/>
    <property type="match status" value="1"/>
</dbReference>
<dbReference type="PROSITE" id="PS00586">
    <property type="entry name" value="RIBOSOMAL_L16_1"/>
    <property type="match status" value="1"/>
</dbReference>
<dbReference type="PROSITE" id="PS00701">
    <property type="entry name" value="RIBOSOMAL_L16_2"/>
    <property type="match status" value="1"/>
</dbReference>
<protein>
    <recommendedName>
        <fullName evidence="1">Large ribosomal subunit protein uL16</fullName>
    </recommendedName>
    <alternativeName>
        <fullName evidence="2">50S ribosomal protein L16</fullName>
    </alternativeName>
</protein>
<organism>
    <name type="scientific">Actinobacillus pleuropneumoniae serotype 3 (strain JL03)</name>
    <dbReference type="NCBI Taxonomy" id="434271"/>
    <lineage>
        <taxon>Bacteria</taxon>
        <taxon>Pseudomonadati</taxon>
        <taxon>Pseudomonadota</taxon>
        <taxon>Gammaproteobacteria</taxon>
        <taxon>Pasteurellales</taxon>
        <taxon>Pasteurellaceae</taxon>
        <taxon>Actinobacillus</taxon>
    </lineage>
</organism>
<keyword id="KW-0687">Ribonucleoprotein</keyword>
<keyword id="KW-0689">Ribosomal protein</keyword>
<keyword id="KW-0694">RNA-binding</keyword>
<keyword id="KW-0699">rRNA-binding</keyword>
<keyword id="KW-0820">tRNA-binding</keyword>
<sequence>MLQPKRTKFRKVHKGRNRGIAGGTEVSFGTFGLKAVGRCRLTARQIEAARRAMTRAVKRQGKIWIRVFPDKPITEKPLEVRMGKGKGNVEYWVALIQPGKVLYEMDGVSEEIARHAFALAAAKLPVKTTFVTKTVM</sequence>
<proteinExistence type="inferred from homology"/>
<comment type="function">
    <text evidence="1">Binds 23S rRNA and is also seen to make contacts with the A and possibly P site tRNAs.</text>
</comment>
<comment type="subunit">
    <text evidence="1">Part of the 50S ribosomal subunit.</text>
</comment>
<comment type="similarity">
    <text evidence="1">Belongs to the universal ribosomal protein uL16 family.</text>
</comment>
<gene>
    <name evidence="1" type="primary">rplP</name>
    <name type="ordered locus">APJL_1802</name>
</gene>
<evidence type="ECO:0000255" key="1">
    <source>
        <dbReference type="HAMAP-Rule" id="MF_01342"/>
    </source>
</evidence>
<evidence type="ECO:0000305" key="2"/>
<name>RL16_ACTPJ</name>
<accession>B0BST8</accession>